<protein>
    <recommendedName>
        <fullName>Jacalin-related lectin 18</fullName>
    </recommendedName>
</protein>
<name>JAL18_ARATH</name>
<gene>
    <name type="primary">JAL18</name>
    <name type="ordered locus">At1g60130</name>
    <name type="ORF">T13D8.3</name>
</gene>
<proteinExistence type="inferred from homology"/>
<dbReference type="EMBL" id="AC004473">
    <property type="protein sequence ID" value="AAC24047.1"/>
    <property type="molecule type" value="Genomic_DNA"/>
</dbReference>
<dbReference type="EMBL" id="CP002684">
    <property type="protein sequence ID" value="AEE33661.1"/>
    <property type="molecule type" value="Genomic_DNA"/>
</dbReference>
<dbReference type="PIR" id="T02266">
    <property type="entry name" value="T02266"/>
</dbReference>
<dbReference type="RefSeq" id="NP_176220.1">
    <property type="nucleotide sequence ID" value="NM_104704.2"/>
</dbReference>
<dbReference type="SMR" id="O80737"/>
<dbReference type="FunCoup" id="O80737">
    <property type="interactions" value="1"/>
</dbReference>
<dbReference type="STRING" id="3702.O80737"/>
<dbReference type="iPTMnet" id="O80737"/>
<dbReference type="PaxDb" id="3702-AT1G60130.1"/>
<dbReference type="EnsemblPlants" id="AT1G60130.1">
    <property type="protein sequence ID" value="AT1G60130.1"/>
    <property type="gene ID" value="AT1G60130"/>
</dbReference>
<dbReference type="GeneID" id="842308"/>
<dbReference type="Gramene" id="AT1G60130.1">
    <property type="protein sequence ID" value="AT1G60130.1"/>
    <property type="gene ID" value="AT1G60130"/>
</dbReference>
<dbReference type="KEGG" id="ath:AT1G60130"/>
<dbReference type="Araport" id="AT1G60130"/>
<dbReference type="TAIR" id="AT1G60130"/>
<dbReference type="eggNOG" id="ENOG502SCUZ">
    <property type="taxonomic scope" value="Eukaryota"/>
</dbReference>
<dbReference type="HOGENOM" id="CLU_041730_0_0_1"/>
<dbReference type="InParanoid" id="O80737"/>
<dbReference type="PhylomeDB" id="O80737"/>
<dbReference type="PRO" id="PR:O80737"/>
<dbReference type="Proteomes" id="UP000006548">
    <property type="component" value="Chromosome 1"/>
</dbReference>
<dbReference type="ExpressionAtlas" id="O80737">
    <property type="expression patterns" value="baseline and differential"/>
</dbReference>
<dbReference type="GO" id="GO:0030246">
    <property type="term" value="F:carbohydrate binding"/>
    <property type="evidence" value="ECO:0007669"/>
    <property type="project" value="UniProtKB-KW"/>
</dbReference>
<dbReference type="CDD" id="cd09612">
    <property type="entry name" value="Jacalin"/>
    <property type="match status" value="4"/>
</dbReference>
<dbReference type="FunFam" id="2.100.10.30:FF:000001">
    <property type="entry name" value="Jacalin-related lectin 33"/>
    <property type="match status" value="3"/>
</dbReference>
<dbReference type="Gene3D" id="2.100.10.30">
    <property type="entry name" value="Jacalin-like lectin domain"/>
    <property type="match status" value="4"/>
</dbReference>
<dbReference type="InterPro" id="IPR001229">
    <property type="entry name" value="Jacalin-like_lectin_dom"/>
</dbReference>
<dbReference type="InterPro" id="IPR033734">
    <property type="entry name" value="Jacalin-like_lectin_dom_plant"/>
</dbReference>
<dbReference type="InterPro" id="IPR036404">
    <property type="entry name" value="Jacalin-like_lectin_dom_sf"/>
</dbReference>
<dbReference type="PANTHER" id="PTHR47293:SF11">
    <property type="entry name" value="JACALIN-RELATED LECTIN 12-RELATED"/>
    <property type="match status" value="1"/>
</dbReference>
<dbReference type="PANTHER" id="PTHR47293">
    <property type="entry name" value="JACALIN-RELATED LECTIN 3"/>
    <property type="match status" value="1"/>
</dbReference>
<dbReference type="Pfam" id="PF01419">
    <property type="entry name" value="Jacalin"/>
    <property type="match status" value="4"/>
</dbReference>
<dbReference type="SMART" id="SM00915">
    <property type="entry name" value="Jacalin"/>
    <property type="match status" value="4"/>
</dbReference>
<dbReference type="SUPFAM" id="SSF51101">
    <property type="entry name" value="Mannose-binding lectins"/>
    <property type="match status" value="4"/>
</dbReference>
<dbReference type="PROSITE" id="PS51752">
    <property type="entry name" value="JACALIN_LECTIN"/>
    <property type="match status" value="4"/>
</dbReference>
<accession>O80737</accession>
<feature type="chain" id="PRO_0000430386" description="Jacalin-related lectin 18">
    <location>
        <begin position="1"/>
        <end position="600"/>
    </location>
</feature>
<feature type="domain" description="Jacalin-type lectin 1" evidence="1">
    <location>
        <begin position="12"/>
        <end position="158"/>
    </location>
</feature>
<feature type="domain" description="Jacalin-type lectin 2" evidence="1">
    <location>
        <begin position="161"/>
        <end position="303"/>
    </location>
</feature>
<feature type="domain" description="Jacalin-type lectin 3" evidence="1">
    <location>
        <begin position="304"/>
        <end position="447"/>
    </location>
</feature>
<feature type="domain" description="Jacalin-type lectin 4" evidence="1">
    <location>
        <begin position="454"/>
        <end position="597"/>
    </location>
</feature>
<sequence>MSQVFSNLFQMTQRLEAQGQKTLDSPFVWDDGSDHDDVTKIHVRGDSRGINCIRFDYIKSGQRKYKSFYGPSWAGFTQTFKINHKEDEQLESVEGFYKPDSRTIVGLQFKTNLRISELIGHGKKDDTKFSLAVDGKKIIGFHGCSGSYLESLGAYFTCIAPTRMEAKGAKGGTDWNDGADHEGVAKIYVRGGRDCIQYIKFDYVKDRKYIYGPAHGVRGRGFTESFEINHLDNEYMVSVEGYYDEGDSGIIQGIQFRTNIKTSELIGYNNGKKFSLAANGKKIIGFHGYADQNLNSLGAYFTTSPFIKLESRESTGDLWDDGTFEGVRKVCIHKQPVLYSVIQFEYVNRGEVENRDLGLRVFIAEEGEFVVNYPYEFIISVEGTFTNEKDPHVASLTFKTSKGRTSSTFGTPGTKKFVLQSKGCGVVGFHGVLSNDYISGLGAYFRLLPPLPDGEKVEAKGGDGGASWDDGGFDCIRKIYIGHGEMGIAFVKFLYDKDNKFVVGDDHGSKTLLGVDEFELEHPDEYLISVEGSYDVVDGSESEVILMLRFKTNMRTSQVFGLDTTSSFILEKECHKIVGFHGKIGKMLHQIGVHVLPIID</sequence>
<reference key="1">
    <citation type="journal article" date="2000" name="Nature">
        <title>Sequence and analysis of chromosome 1 of the plant Arabidopsis thaliana.</title>
        <authorList>
            <person name="Theologis A."/>
            <person name="Ecker J.R."/>
            <person name="Palm C.J."/>
            <person name="Federspiel N.A."/>
            <person name="Kaul S."/>
            <person name="White O."/>
            <person name="Alonso J."/>
            <person name="Altafi H."/>
            <person name="Araujo R."/>
            <person name="Bowman C.L."/>
            <person name="Brooks S.Y."/>
            <person name="Buehler E."/>
            <person name="Chan A."/>
            <person name="Chao Q."/>
            <person name="Chen H."/>
            <person name="Cheuk R.F."/>
            <person name="Chin C.W."/>
            <person name="Chung M.K."/>
            <person name="Conn L."/>
            <person name="Conway A.B."/>
            <person name="Conway A.R."/>
            <person name="Creasy T.H."/>
            <person name="Dewar K."/>
            <person name="Dunn P."/>
            <person name="Etgu P."/>
            <person name="Feldblyum T.V."/>
            <person name="Feng J.-D."/>
            <person name="Fong B."/>
            <person name="Fujii C.Y."/>
            <person name="Gill J.E."/>
            <person name="Goldsmith A.D."/>
            <person name="Haas B."/>
            <person name="Hansen N.F."/>
            <person name="Hughes B."/>
            <person name="Huizar L."/>
            <person name="Hunter J.L."/>
            <person name="Jenkins J."/>
            <person name="Johnson-Hopson C."/>
            <person name="Khan S."/>
            <person name="Khaykin E."/>
            <person name="Kim C.J."/>
            <person name="Koo H.L."/>
            <person name="Kremenetskaia I."/>
            <person name="Kurtz D.B."/>
            <person name="Kwan A."/>
            <person name="Lam B."/>
            <person name="Langin-Hooper S."/>
            <person name="Lee A."/>
            <person name="Lee J.M."/>
            <person name="Lenz C.A."/>
            <person name="Li J.H."/>
            <person name="Li Y.-P."/>
            <person name="Lin X."/>
            <person name="Liu S.X."/>
            <person name="Liu Z.A."/>
            <person name="Luros J.S."/>
            <person name="Maiti R."/>
            <person name="Marziali A."/>
            <person name="Militscher J."/>
            <person name="Miranda M."/>
            <person name="Nguyen M."/>
            <person name="Nierman W.C."/>
            <person name="Osborne B.I."/>
            <person name="Pai G."/>
            <person name="Peterson J."/>
            <person name="Pham P.K."/>
            <person name="Rizzo M."/>
            <person name="Rooney T."/>
            <person name="Rowley D."/>
            <person name="Sakano H."/>
            <person name="Salzberg S.L."/>
            <person name="Schwartz J.R."/>
            <person name="Shinn P."/>
            <person name="Southwick A.M."/>
            <person name="Sun H."/>
            <person name="Tallon L.J."/>
            <person name="Tambunga G."/>
            <person name="Toriumi M.J."/>
            <person name="Town C.D."/>
            <person name="Utterback T."/>
            <person name="Van Aken S."/>
            <person name="Vaysberg M."/>
            <person name="Vysotskaia V.S."/>
            <person name="Walker M."/>
            <person name="Wu D."/>
            <person name="Yu G."/>
            <person name="Fraser C.M."/>
            <person name="Venter J.C."/>
            <person name="Davis R.W."/>
        </authorList>
    </citation>
    <scope>NUCLEOTIDE SEQUENCE [LARGE SCALE GENOMIC DNA]</scope>
    <source>
        <strain>cv. Columbia</strain>
    </source>
</reference>
<reference key="2">
    <citation type="journal article" date="2017" name="Plant J.">
        <title>Araport11: a complete reannotation of the Arabidopsis thaliana reference genome.</title>
        <authorList>
            <person name="Cheng C.Y."/>
            <person name="Krishnakumar V."/>
            <person name="Chan A.P."/>
            <person name="Thibaud-Nissen F."/>
            <person name="Schobel S."/>
            <person name="Town C.D."/>
        </authorList>
    </citation>
    <scope>GENOME REANNOTATION</scope>
    <source>
        <strain>cv. Columbia</strain>
    </source>
</reference>
<reference key="3">
    <citation type="journal article" date="2008" name="Plant Cell Physiol.">
        <title>Antagonistic jacalin-related lectins regulate the size of ER body-type beta-glucosidase complexes in Arabidopsis thaliana.</title>
        <authorList>
            <person name="Nagano A.J."/>
            <person name="Fukao Y."/>
            <person name="Fujiwara M."/>
            <person name="Nishimura M."/>
            <person name="Hara-Nishimura I."/>
        </authorList>
    </citation>
    <scope>GENE FAMILY</scope>
    <scope>NOMENCLATURE</scope>
</reference>
<evidence type="ECO:0000255" key="1">
    <source>
        <dbReference type="PROSITE-ProRule" id="PRU01088"/>
    </source>
</evidence>
<evidence type="ECO:0000305" key="2"/>
<keyword id="KW-0430">Lectin</keyword>
<keyword id="KW-1185">Reference proteome</keyword>
<keyword id="KW-0677">Repeat</keyword>
<comment type="similarity">
    <text evidence="1 2">Belongs to the jacalin lectin family.</text>
</comment>
<organism>
    <name type="scientific">Arabidopsis thaliana</name>
    <name type="common">Mouse-ear cress</name>
    <dbReference type="NCBI Taxonomy" id="3702"/>
    <lineage>
        <taxon>Eukaryota</taxon>
        <taxon>Viridiplantae</taxon>
        <taxon>Streptophyta</taxon>
        <taxon>Embryophyta</taxon>
        <taxon>Tracheophyta</taxon>
        <taxon>Spermatophyta</taxon>
        <taxon>Magnoliopsida</taxon>
        <taxon>eudicotyledons</taxon>
        <taxon>Gunneridae</taxon>
        <taxon>Pentapetalae</taxon>
        <taxon>rosids</taxon>
        <taxon>malvids</taxon>
        <taxon>Brassicales</taxon>
        <taxon>Brassicaceae</taxon>
        <taxon>Camelineae</taxon>
        <taxon>Arabidopsis</taxon>
    </lineage>
</organism>